<name>MDTC_ECOSE</name>
<protein>
    <recommendedName>
        <fullName evidence="1">Multidrug resistance protein MdtC</fullName>
    </recommendedName>
    <alternativeName>
        <fullName evidence="1">Multidrug transporter MdtC</fullName>
    </alternativeName>
</protein>
<organism>
    <name type="scientific">Escherichia coli (strain SE11)</name>
    <dbReference type="NCBI Taxonomy" id="409438"/>
    <lineage>
        <taxon>Bacteria</taxon>
        <taxon>Pseudomonadati</taxon>
        <taxon>Pseudomonadota</taxon>
        <taxon>Gammaproteobacteria</taxon>
        <taxon>Enterobacterales</taxon>
        <taxon>Enterobacteriaceae</taxon>
        <taxon>Escherichia</taxon>
    </lineage>
</organism>
<reference key="1">
    <citation type="journal article" date="2008" name="DNA Res.">
        <title>Complete genome sequence and comparative analysis of the wild-type commensal Escherichia coli strain SE11 isolated from a healthy adult.</title>
        <authorList>
            <person name="Oshima K."/>
            <person name="Toh H."/>
            <person name="Ogura Y."/>
            <person name="Sasamoto H."/>
            <person name="Morita H."/>
            <person name="Park S.-H."/>
            <person name="Ooka T."/>
            <person name="Iyoda S."/>
            <person name="Taylor T.D."/>
            <person name="Hayashi T."/>
            <person name="Itoh K."/>
            <person name="Hattori M."/>
        </authorList>
    </citation>
    <scope>NUCLEOTIDE SEQUENCE [LARGE SCALE GENOMIC DNA]</scope>
    <source>
        <strain>SE11</strain>
    </source>
</reference>
<comment type="function">
    <text evidence="1">The MdtABC tripartite complex confers resistance against novobiocin and deoxycholate.</text>
</comment>
<comment type="subunit">
    <text evidence="1">Part of a tripartite efflux system composed of MdtA, MdtB and MdtC. MdtC forms a heteromultimer with MdtB.</text>
</comment>
<comment type="subcellular location">
    <subcellularLocation>
        <location evidence="1">Cell inner membrane</location>
        <topology evidence="1">Multi-pass membrane protein</topology>
    </subcellularLocation>
</comment>
<comment type="induction">
    <text>The mdtABC operon is transcriptionally activated by BaeR.</text>
</comment>
<comment type="similarity">
    <text evidence="1">Belongs to the resistance-nodulation-cell division (RND) (TC 2.A.6) family. MdtC subfamily.</text>
</comment>
<gene>
    <name evidence="1" type="primary">mdtC</name>
    <name type="ordered locus">ECSE_2349</name>
</gene>
<accession>B6HYS1</accession>
<proteinExistence type="evidence at transcript level"/>
<feature type="chain" id="PRO_1000145672" description="Multidrug resistance protein MdtC">
    <location>
        <begin position="1"/>
        <end position="1025"/>
    </location>
</feature>
<feature type="transmembrane region" description="Helical" evidence="1">
    <location>
        <begin position="3"/>
        <end position="23"/>
    </location>
</feature>
<feature type="transmembrane region" description="Helical" evidence="1">
    <location>
        <begin position="333"/>
        <end position="353"/>
    </location>
</feature>
<feature type="transmembrane region" description="Helical" evidence="1">
    <location>
        <begin position="360"/>
        <end position="380"/>
    </location>
</feature>
<feature type="transmembrane region" description="Helical" evidence="1">
    <location>
        <begin position="387"/>
        <end position="407"/>
    </location>
</feature>
<feature type="transmembrane region" description="Helical" evidence="1">
    <location>
        <begin position="431"/>
        <end position="451"/>
    </location>
</feature>
<feature type="transmembrane region" description="Helical" evidence="1">
    <location>
        <begin position="463"/>
        <end position="483"/>
    </location>
</feature>
<feature type="transmembrane region" description="Helical" evidence="1">
    <location>
        <begin position="528"/>
        <end position="548"/>
    </location>
</feature>
<feature type="transmembrane region" description="Helical" evidence="1">
    <location>
        <begin position="853"/>
        <end position="873"/>
    </location>
</feature>
<feature type="transmembrane region" description="Helical" evidence="1">
    <location>
        <begin position="875"/>
        <end position="895"/>
    </location>
</feature>
<feature type="transmembrane region" description="Helical" evidence="1">
    <location>
        <begin position="897"/>
        <end position="917"/>
    </location>
</feature>
<feature type="transmembrane region" description="Helical" evidence="1">
    <location>
        <begin position="953"/>
        <end position="973"/>
    </location>
</feature>
<feature type="transmembrane region" description="Helical" evidence="1">
    <location>
        <begin position="984"/>
        <end position="1004"/>
    </location>
</feature>
<dbReference type="EMBL" id="AP009240">
    <property type="protein sequence ID" value="BAG77873.1"/>
    <property type="molecule type" value="Genomic_DNA"/>
</dbReference>
<dbReference type="RefSeq" id="WP_000667549.1">
    <property type="nucleotide sequence ID" value="NC_011415.1"/>
</dbReference>
<dbReference type="SMR" id="B6HYS1"/>
<dbReference type="KEGG" id="ecy:ECSE_2349"/>
<dbReference type="HOGENOM" id="CLU_002755_1_2_6"/>
<dbReference type="Proteomes" id="UP000008199">
    <property type="component" value="Chromosome"/>
</dbReference>
<dbReference type="GO" id="GO:0005886">
    <property type="term" value="C:plasma membrane"/>
    <property type="evidence" value="ECO:0007669"/>
    <property type="project" value="UniProtKB-SubCell"/>
</dbReference>
<dbReference type="GO" id="GO:0042910">
    <property type="term" value="F:xenobiotic transmembrane transporter activity"/>
    <property type="evidence" value="ECO:0007669"/>
    <property type="project" value="TreeGrafter"/>
</dbReference>
<dbReference type="FunFam" id="1.20.1640.10:FF:000001">
    <property type="entry name" value="Efflux pump membrane transporter"/>
    <property type="match status" value="1"/>
</dbReference>
<dbReference type="FunFam" id="3.30.70.1430:FF:000001">
    <property type="entry name" value="Efflux pump membrane transporter"/>
    <property type="match status" value="1"/>
</dbReference>
<dbReference type="FunFam" id="3.30.2090.10:FF:000004">
    <property type="entry name" value="Multidrug resistance protein MdtC"/>
    <property type="match status" value="1"/>
</dbReference>
<dbReference type="FunFam" id="3.30.2090.10:FF:000005">
    <property type="entry name" value="Multidrug resistance protein MdtC"/>
    <property type="match status" value="1"/>
</dbReference>
<dbReference type="FunFam" id="3.30.70.1430:FF:000004">
    <property type="entry name" value="Multidrug resistance protein MdtC"/>
    <property type="match status" value="1"/>
</dbReference>
<dbReference type="Gene3D" id="3.30.70.1430">
    <property type="entry name" value="Multidrug efflux transporter AcrB pore domain"/>
    <property type="match status" value="2"/>
</dbReference>
<dbReference type="Gene3D" id="3.30.70.1440">
    <property type="entry name" value="Multidrug efflux transporter AcrB pore domain"/>
    <property type="match status" value="1"/>
</dbReference>
<dbReference type="Gene3D" id="3.30.70.1320">
    <property type="entry name" value="Multidrug efflux transporter AcrB pore domain like"/>
    <property type="match status" value="1"/>
</dbReference>
<dbReference type="Gene3D" id="3.30.2090.10">
    <property type="entry name" value="Multidrug efflux transporter AcrB TolC docking domain, DN and DC subdomains"/>
    <property type="match status" value="2"/>
</dbReference>
<dbReference type="Gene3D" id="1.20.1640.10">
    <property type="entry name" value="Multidrug efflux transporter AcrB transmembrane domain"/>
    <property type="match status" value="2"/>
</dbReference>
<dbReference type="HAMAP" id="MF_01424">
    <property type="entry name" value="MdtC"/>
    <property type="match status" value="1"/>
</dbReference>
<dbReference type="InterPro" id="IPR027463">
    <property type="entry name" value="AcrB_DN_DC_subdom"/>
</dbReference>
<dbReference type="InterPro" id="IPR001036">
    <property type="entry name" value="Acrflvin-R"/>
</dbReference>
<dbReference type="InterPro" id="IPR023931">
    <property type="entry name" value="Multidrug-R_MdtC"/>
</dbReference>
<dbReference type="NCBIfam" id="NF007905">
    <property type="entry name" value="PRK10614.1"/>
    <property type="match status" value="1"/>
</dbReference>
<dbReference type="NCBIfam" id="NF033617">
    <property type="entry name" value="RND_permease_2"/>
    <property type="match status" value="1"/>
</dbReference>
<dbReference type="PANTHER" id="PTHR32063">
    <property type="match status" value="1"/>
</dbReference>
<dbReference type="PANTHER" id="PTHR32063:SF34">
    <property type="entry name" value="MULTIDRUG RESISTANCE PROTEIN MDTC"/>
    <property type="match status" value="1"/>
</dbReference>
<dbReference type="Pfam" id="PF00873">
    <property type="entry name" value="ACR_tran"/>
    <property type="match status" value="1"/>
</dbReference>
<dbReference type="PRINTS" id="PR00702">
    <property type="entry name" value="ACRIFLAVINRP"/>
</dbReference>
<dbReference type="SUPFAM" id="SSF82693">
    <property type="entry name" value="Multidrug efflux transporter AcrB pore domain, PN1, PN2, PC1 and PC2 subdomains"/>
    <property type="match status" value="4"/>
</dbReference>
<dbReference type="SUPFAM" id="SSF82714">
    <property type="entry name" value="Multidrug efflux transporter AcrB TolC docking domain, DN and DC subdomains"/>
    <property type="match status" value="2"/>
</dbReference>
<dbReference type="SUPFAM" id="SSF82866">
    <property type="entry name" value="Multidrug efflux transporter AcrB transmembrane domain"/>
    <property type="match status" value="2"/>
</dbReference>
<evidence type="ECO:0000255" key="1">
    <source>
        <dbReference type="HAMAP-Rule" id="MF_01424"/>
    </source>
</evidence>
<sequence length="1025" mass="111055">MKFFALFIYRPVATILLSVAITLCGILGFRMLPVAPLPQVDFPVIMVSASLPGASPETMASSVATPLERSLGRIAGVSEMTSSSSLGSTRIILQFDFDRDINGAARDVQAAINAAQSLLPSGMPSRPTYRKANPSDAPIMILTLTSDTYSQGELYDFASTQLAPTISQIDGVGDVDVGGSSLPAVRVGLNPQALFNQGVSLDDVRTAISNANVRKPQGALEDGTHRWQIQTNDELKTAAEYQPLIIHYNNGGAVRLGDVATVTDSVQDVRNAGMTNAKPAILLMIRKLPEANIIQTVDSIRAKLPELQETIPAAIDLQIAQDRSPTIRASLEEVEQTLIISVALVILVVFLFLRSGRATIIPAVVVPVSLIGTFAAMYLCGFSLNNLSLMALTIATGFVVDDAIVVLENIARHLEAGMKPLQAALQGTREVGFTVLSMSLSLVAVFLPLLLMGGLPGRLLREFAVTLSVAIGISLLVSLTLTPMMCGWMLKASKPREQKRLRGFGRMLVALQQGYGKSLKWVLNHTRLVGVVLLGTIALNIWLYISIPKTFFPEQDTGVLMGGIQADQSISFQAMRGKLQDFMKIIRDDPAVDNVTGFTGGSRVNSGMMFITLKPRDERSETAQQIIDRLRVKLAKEPGANLFLMAVQDIRVGGRQSNASYQYTLLSDDLAALREWEPKIRKKLATLPELADVNSDQQDNGAEMNLVYDRDTMARLGIDVQAANSLLNNAFGQRQISTIYQPMNQYKVVMEVDPRYTQDISALEKMFVINNEGKAIPLSYFAKWQPANAPLSVNHQGLSAASTISFNLPTGKSLSDASAAIDRAMTQLGVPSTVRGSFAGTAQVFQETMNSQVILIIAAIATVYIVLGILYESYVHPLTILSTLPSAGVGALLALELFNAPFSLIALIGIMLLIGIVKKNAIMMVDFALEAQRHGNLTPQEAIFQACLLRFRPIMMTTLAALFGALPLVLSGGDGSELRQPLGITIVGGLVMSQLLTLYTTPVVYLFFDRLRLRFSRKPKQTVTE</sequence>
<keyword id="KW-0997">Cell inner membrane</keyword>
<keyword id="KW-1003">Cell membrane</keyword>
<keyword id="KW-0472">Membrane</keyword>
<keyword id="KW-0812">Transmembrane</keyword>
<keyword id="KW-1133">Transmembrane helix</keyword>
<keyword id="KW-0813">Transport</keyword>